<evidence type="ECO:0000255" key="1">
    <source>
        <dbReference type="HAMAP-Rule" id="MF_01463"/>
    </source>
</evidence>
<evidence type="ECO:0000269" key="2">
    <source>
    </source>
</evidence>
<comment type="function">
    <text evidence="1 2">Involved in protein export.</text>
</comment>
<comment type="subunit">
    <text evidence="2">Part of the protein translocation apparatus. Forms a homodimer and complexes with SecF.</text>
</comment>
<comment type="subcellular location">
    <subcellularLocation>
        <location evidence="1 2">Cell membrane</location>
        <topology evidence="1 2">Multi-pass membrane protein</topology>
    </subcellularLocation>
</comment>
<comment type="disruption phenotype">
    <text evidence="2">A double secD and secF deletion grows very poorly on solid medium at 45 degrees Celsius, confers a severe cold-sensitive growth phenotype (30 degrees Celsius), as well as having defects in Sec-dependent protein translocation. Has no effects on Sec-independent Tat substrate protein export.</text>
</comment>
<comment type="similarity">
    <text evidence="1">Belongs to the SecD/SecF family. SecD subfamily.</text>
</comment>
<gene>
    <name evidence="1" type="primary">secD</name>
    <name type="ordered locus">HVO_1976</name>
</gene>
<proteinExistence type="evidence at protein level"/>
<sequence length="524" mass="55006">MSTLRDNWRVIFLVAAILLSTFALFSPTMGNQSPIGEDDSATNLQFGLQLDGGTRIRAPLVGVTAEDVEFEGDSERVVERQVAAQIAGADAADIIVRTGAESSTVEATIENVTADDLSAALDAAGYAHGEVRDGVTGTTRAETVRVLQSKINEAGLSGGTVQQVTTATGEHFILVEVPNRDQSDVVDLVGERGTVQIDIYYPTGTDNGSRTYETREAVLTQADFTSIGTAQESQTGSGAFVPVSVRDDPAAEFQTAIQDTGLAQPGGTRCTYMEDGGRNTTEGCLLLVVNGEVVNAFGMSGGLADTMRAGEWAGAPSFQLQTRNTSEAQEIAINLRAGALPARLDLSGEDSGTSSYISPSQGESFKFDSLITGIVAVLAVAGVVFIRYGKPQVALPMIVTGLSEVYILLGFAAAIGYPLDLSVIAGFIAVIGTGVDDLIIIADEVMGEGSVKSRKVFQSRFRRAFWVIGAAAATTIIAMSPLAVLSLGDLQGFAIFTILGVIVGVLVTRPAYGDILRLLLTEDR</sequence>
<protein>
    <recommendedName>
        <fullName evidence="1">Protein-export membrane protein SecD</fullName>
    </recommendedName>
</protein>
<accession>D4GTK5</accession>
<accession>Q8U4T9</accession>
<name>SECD_HALVD</name>
<dbReference type="EMBL" id="AF395892">
    <property type="protein sequence ID" value="AAL74409.1"/>
    <property type="molecule type" value="Genomic_DNA"/>
</dbReference>
<dbReference type="EMBL" id="CP001956">
    <property type="protein sequence ID" value="ADE03176.1"/>
    <property type="molecule type" value="Genomic_DNA"/>
</dbReference>
<dbReference type="RefSeq" id="WP_004041855.1">
    <property type="nucleotide sequence ID" value="NC_013967.1"/>
</dbReference>
<dbReference type="STRING" id="309800.HVO_1976"/>
<dbReference type="PaxDb" id="309800-C498_05151"/>
<dbReference type="EnsemblBacteria" id="ADE03176">
    <property type="protein sequence ID" value="ADE03176"/>
    <property type="gene ID" value="HVO_1976"/>
</dbReference>
<dbReference type="GeneID" id="8926304"/>
<dbReference type="KEGG" id="hvo:HVO_1976"/>
<dbReference type="eggNOG" id="arCOG03055">
    <property type="taxonomic scope" value="Archaea"/>
</dbReference>
<dbReference type="HOGENOM" id="CLU_007894_5_0_2"/>
<dbReference type="OrthoDB" id="146638at2157"/>
<dbReference type="Proteomes" id="UP000008243">
    <property type="component" value="Chromosome"/>
</dbReference>
<dbReference type="GO" id="GO:0005886">
    <property type="term" value="C:plasma membrane"/>
    <property type="evidence" value="ECO:0007669"/>
    <property type="project" value="UniProtKB-SubCell"/>
</dbReference>
<dbReference type="GO" id="GO:0065002">
    <property type="term" value="P:intracellular protein transmembrane transport"/>
    <property type="evidence" value="ECO:0007669"/>
    <property type="project" value="UniProtKB-UniRule"/>
</dbReference>
<dbReference type="GO" id="GO:0006605">
    <property type="term" value="P:protein targeting"/>
    <property type="evidence" value="ECO:0007669"/>
    <property type="project" value="UniProtKB-UniRule"/>
</dbReference>
<dbReference type="Gene3D" id="3.30.70.3220">
    <property type="match status" value="1"/>
</dbReference>
<dbReference type="Gene3D" id="1.20.1640.10">
    <property type="entry name" value="Multidrug efflux transporter AcrB transmembrane domain"/>
    <property type="match status" value="1"/>
</dbReference>
<dbReference type="HAMAP" id="MF_01463_A">
    <property type="entry name" value="SecD_A"/>
    <property type="match status" value="1"/>
</dbReference>
<dbReference type="InterPro" id="IPR022813">
    <property type="entry name" value="SecD/SecF_arch_bac"/>
</dbReference>
<dbReference type="InterPro" id="IPR024912">
    <property type="entry name" value="SecD_arc"/>
</dbReference>
<dbReference type="InterPro" id="IPR048634">
    <property type="entry name" value="SecD_SecF_C"/>
</dbReference>
<dbReference type="NCBIfam" id="NF006215">
    <property type="entry name" value="PRK08343.1-1"/>
    <property type="match status" value="1"/>
</dbReference>
<dbReference type="PANTHER" id="PTHR30081:SF1">
    <property type="entry name" value="PROTEIN TRANSLOCASE SUBUNIT SECD"/>
    <property type="match status" value="1"/>
</dbReference>
<dbReference type="PANTHER" id="PTHR30081">
    <property type="entry name" value="PROTEIN-EXPORT MEMBRANE PROTEIN SEC"/>
    <property type="match status" value="1"/>
</dbReference>
<dbReference type="Pfam" id="PF02355">
    <property type="entry name" value="SecD_SecF_C"/>
    <property type="match status" value="1"/>
</dbReference>
<dbReference type="SUPFAM" id="SSF82866">
    <property type="entry name" value="Multidrug efflux transporter AcrB transmembrane domain"/>
    <property type="match status" value="1"/>
</dbReference>
<organism>
    <name type="scientific">Haloferax volcanii (strain ATCC 29605 / DSM 3757 / JCM 8879 / NBRC 14742 / NCIMB 2012 / VKM B-1768 / DS2)</name>
    <name type="common">Halobacterium volcanii</name>
    <dbReference type="NCBI Taxonomy" id="309800"/>
    <lineage>
        <taxon>Archaea</taxon>
        <taxon>Methanobacteriati</taxon>
        <taxon>Methanobacteriota</taxon>
        <taxon>Stenosarchaea group</taxon>
        <taxon>Halobacteria</taxon>
        <taxon>Halobacteriales</taxon>
        <taxon>Haloferacaceae</taxon>
        <taxon>Haloferax</taxon>
    </lineage>
</organism>
<reference key="1">
    <citation type="journal article" date="2006" name="J. Bacteriol.">
        <title>Archaeal and bacterial SecD and SecF homologs exhibit striking structural and functional conservation.</title>
        <authorList>
            <person name="Hand N.J."/>
            <person name="Klein R."/>
            <person name="Laskewitz A."/>
            <person name="Pohlschroder M."/>
        </authorList>
    </citation>
    <scope>NUCLEOTIDE SEQUENCE [GENOMIC DNA]</scope>
    <scope>FUNCTION IN PROTEIN EXPORT</scope>
    <scope>SUBUNIT</scope>
    <scope>SUBCELLULAR LOCATION</scope>
    <scope>DISRUPTION PHENOTYPE</scope>
    <scope>PROBABLE OPERON STRUCTURE</scope>
    <source>
        <strain>DS2 / DS70</strain>
        <strain>DS2 / DSM 5716 / WFD11</strain>
    </source>
</reference>
<reference key="2">
    <citation type="journal article" date="2010" name="PLoS ONE">
        <title>The complete genome sequence of Haloferax volcanii DS2, a model archaeon.</title>
        <authorList>
            <person name="Hartman A.L."/>
            <person name="Norais C."/>
            <person name="Badger J.H."/>
            <person name="Delmas S."/>
            <person name="Haldenby S."/>
            <person name="Madupu R."/>
            <person name="Robinson J."/>
            <person name="Khouri H."/>
            <person name="Ren Q."/>
            <person name="Lowe T.M."/>
            <person name="Maupin-Furlow J."/>
            <person name="Pohlschroder M."/>
            <person name="Daniels C."/>
            <person name="Pfeiffer F."/>
            <person name="Allers T."/>
            <person name="Eisen J.A."/>
        </authorList>
    </citation>
    <scope>NUCLEOTIDE SEQUENCE [LARGE SCALE GENOMIC DNA]</scope>
    <source>
        <strain>ATCC 29605 / DSM 3757 / JCM 8879 / NBRC 14742 / NCIMB 2012 / VKM B-1768 / DS2</strain>
    </source>
</reference>
<feature type="chain" id="PRO_0000412202" description="Protein-export membrane protein SecD">
    <location>
        <begin position="1"/>
        <end position="524"/>
    </location>
</feature>
<feature type="transmembrane region" description="Helical" evidence="1">
    <location>
        <begin position="10"/>
        <end position="30"/>
    </location>
</feature>
<feature type="transmembrane region" description="Helical" evidence="1">
    <location>
        <begin position="366"/>
        <end position="386"/>
    </location>
</feature>
<feature type="transmembrane region" description="Helical" evidence="1">
    <location>
        <begin position="389"/>
        <end position="409"/>
    </location>
</feature>
<feature type="transmembrane region" description="Helical" evidence="1">
    <location>
        <begin position="420"/>
        <end position="442"/>
    </location>
</feature>
<feature type="transmembrane region" description="Helical" evidence="1">
    <location>
        <begin position="465"/>
        <end position="485"/>
    </location>
</feature>
<feature type="transmembrane region" description="Helical" evidence="1">
    <location>
        <begin position="487"/>
        <end position="507"/>
    </location>
</feature>
<keyword id="KW-1003">Cell membrane</keyword>
<keyword id="KW-0472">Membrane</keyword>
<keyword id="KW-0653">Protein transport</keyword>
<keyword id="KW-1185">Reference proteome</keyword>
<keyword id="KW-0811">Translocation</keyword>
<keyword id="KW-0812">Transmembrane</keyword>
<keyword id="KW-1133">Transmembrane helix</keyword>
<keyword id="KW-0813">Transport</keyword>